<proteinExistence type="inferred from homology"/>
<keyword id="KW-0507">mRNA processing</keyword>
<keyword id="KW-0539">Nucleus</keyword>
<keyword id="KW-1185">Reference proteome</keyword>
<accession>Q6CPC3</accession>
<name>FIP1_KLULA</name>
<organism>
    <name type="scientific">Kluyveromyces lactis (strain ATCC 8585 / CBS 2359 / DSM 70799 / NBRC 1267 / NRRL Y-1140 / WM37)</name>
    <name type="common">Yeast</name>
    <name type="synonym">Candida sphaerica</name>
    <dbReference type="NCBI Taxonomy" id="284590"/>
    <lineage>
        <taxon>Eukaryota</taxon>
        <taxon>Fungi</taxon>
        <taxon>Dikarya</taxon>
        <taxon>Ascomycota</taxon>
        <taxon>Saccharomycotina</taxon>
        <taxon>Saccharomycetes</taxon>
        <taxon>Saccharomycetales</taxon>
        <taxon>Saccharomycetaceae</taxon>
        <taxon>Kluyveromyces</taxon>
    </lineage>
</organism>
<reference key="1">
    <citation type="journal article" date="2004" name="Nature">
        <title>Genome evolution in yeasts.</title>
        <authorList>
            <person name="Dujon B."/>
            <person name="Sherman D."/>
            <person name="Fischer G."/>
            <person name="Durrens P."/>
            <person name="Casaregola S."/>
            <person name="Lafontaine I."/>
            <person name="de Montigny J."/>
            <person name="Marck C."/>
            <person name="Neuveglise C."/>
            <person name="Talla E."/>
            <person name="Goffard N."/>
            <person name="Frangeul L."/>
            <person name="Aigle M."/>
            <person name="Anthouard V."/>
            <person name="Babour A."/>
            <person name="Barbe V."/>
            <person name="Barnay S."/>
            <person name="Blanchin S."/>
            <person name="Beckerich J.-M."/>
            <person name="Beyne E."/>
            <person name="Bleykasten C."/>
            <person name="Boisrame A."/>
            <person name="Boyer J."/>
            <person name="Cattolico L."/>
            <person name="Confanioleri F."/>
            <person name="de Daruvar A."/>
            <person name="Despons L."/>
            <person name="Fabre E."/>
            <person name="Fairhead C."/>
            <person name="Ferry-Dumazet H."/>
            <person name="Groppi A."/>
            <person name="Hantraye F."/>
            <person name="Hennequin C."/>
            <person name="Jauniaux N."/>
            <person name="Joyet P."/>
            <person name="Kachouri R."/>
            <person name="Kerrest A."/>
            <person name="Koszul R."/>
            <person name="Lemaire M."/>
            <person name="Lesur I."/>
            <person name="Ma L."/>
            <person name="Muller H."/>
            <person name="Nicaud J.-M."/>
            <person name="Nikolski M."/>
            <person name="Oztas S."/>
            <person name="Ozier-Kalogeropoulos O."/>
            <person name="Pellenz S."/>
            <person name="Potier S."/>
            <person name="Richard G.-F."/>
            <person name="Straub M.-L."/>
            <person name="Suleau A."/>
            <person name="Swennen D."/>
            <person name="Tekaia F."/>
            <person name="Wesolowski-Louvel M."/>
            <person name="Westhof E."/>
            <person name="Wirth B."/>
            <person name="Zeniou-Meyer M."/>
            <person name="Zivanovic Y."/>
            <person name="Bolotin-Fukuhara M."/>
            <person name="Thierry A."/>
            <person name="Bouchier C."/>
            <person name="Caudron B."/>
            <person name="Scarpelli C."/>
            <person name="Gaillardin C."/>
            <person name="Weissenbach J."/>
            <person name="Wincker P."/>
            <person name="Souciet J.-L."/>
        </authorList>
    </citation>
    <scope>NUCLEOTIDE SEQUENCE [LARGE SCALE GENOMIC DNA]</scope>
    <source>
        <strain>ATCC 8585 / CBS 2359 / DSM 70799 / NBRC 1267 / NRRL Y-1140 / WM37</strain>
    </source>
</reference>
<gene>
    <name type="primary">FIP1</name>
    <name type="ordered locus">KLLA0E05940g</name>
</gene>
<dbReference type="EMBL" id="CR382125">
    <property type="protein sequence ID" value="CAG99303.1"/>
    <property type="molecule type" value="Genomic_DNA"/>
</dbReference>
<dbReference type="RefSeq" id="XP_454216.1">
    <property type="nucleotide sequence ID" value="XM_454216.1"/>
</dbReference>
<dbReference type="SMR" id="Q6CPC3"/>
<dbReference type="FunCoup" id="Q6CPC3">
    <property type="interactions" value="251"/>
</dbReference>
<dbReference type="STRING" id="284590.Q6CPC3"/>
<dbReference type="PaxDb" id="284590-Q6CPC3"/>
<dbReference type="KEGG" id="kla:KLLA0_E05985g"/>
<dbReference type="eggNOG" id="KOG1049">
    <property type="taxonomic scope" value="Eukaryota"/>
</dbReference>
<dbReference type="HOGENOM" id="CLU_039307_2_1_1"/>
<dbReference type="InParanoid" id="Q6CPC3"/>
<dbReference type="OMA" id="GFNEYTW"/>
<dbReference type="Proteomes" id="UP000000598">
    <property type="component" value="Chromosome E"/>
</dbReference>
<dbReference type="GO" id="GO:0005847">
    <property type="term" value="C:mRNA cleavage and polyadenylation specificity factor complex"/>
    <property type="evidence" value="ECO:0007669"/>
    <property type="project" value="TreeGrafter"/>
</dbReference>
<dbReference type="GO" id="GO:0006397">
    <property type="term" value="P:mRNA processing"/>
    <property type="evidence" value="ECO:0007669"/>
    <property type="project" value="UniProtKB-KW"/>
</dbReference>
<dbReference type="InterPro" id="IPR007854">
    <property type="entry name" value="Fip1_dom"/>
</dbReference>
<dbReference type="InterPro" id="IPR051187">
    <property type="entry name" value="Pre-mRNA_3'-end_processing_reg"/>
</dbReference>
<dbReference type="PANTHER" id="PTHR13484">
    <property type="entry name" value="FIP1-LIKE 1 PROTEIN"/>
    <property type="match status" value="1"/>
</dbReference>
<dbReference type="PANTHER" id="PTHR13484:SF0">
    <property type="entry name" value="PRE-MRNA 3'-END-PROCESSING FACTOR FIP1"/>
    <property type="match status" value="1"/>
</dbReference>
<dbReference type="Pfam" id="PF05182">
    <property type="entry name" value="Fip1"/>
    <property type="match status" value="1"/>
</dbReference>
<protein>
    <recommendedName>
        <fullName>Pre-mRNA polyadenylation factor FIP1</fullName>
    </recommendedName>
</protein>
<evidence type="ECO:0000250" key="1"/>
<evidence type="ECO:0000256" key="2">
    <source>
        <dbReference type="SAM" id="MobiDB-lite"/>
    </source>
</evidence>
<evidence type="ECO:0000305" key="3"/>
<sequence>MSSEDEDDKFLYSDEEDSNVVAKQEGPALKRQKVEETPKILAHDVPEGNTNEVESEASNQDSSSDEDDSSDSDSDVEIIIGTGNDTSKIDSGKSQISAITDTTPLGTADHAIAAVAGISDVVPVQEGSIPPEQQQQQQQTIDLNPDAQFDGKPIVQIDPEILKEKPWRQPGANISDYFNYGFNEQTWMEYLHRQEHLTKEYNPQKILMNLLALQQQGKLNDPGSGQPVQNTIQPPPPPMGLPPMFGGFPGFPFPGMMNNMQNQNVSSMNNMNNMNNMNNMNNINNNNNNNLNDKK</sequence>
<feature type="chain" id="PRO_0000238514" description="Pre-mRNA polyadenylation factor FIP1">
    <location>
        <begin position="1"/>
        <end position="295"/>
    </location>
</feature>
<feature type="region of interest" description="Disordered" evidence="2">
    <location>
        <begin position="1"/>
        <end position="93"/>
    </location>
</feature>
<feature type="compositionally biased region" description="Acidic residues" evidence="2">
    <location>
        <begin position="1"/>
        <end position="18"/>
    </location>
</feature>
<feature type="compositionally biased region" description="Basic and acidic residues" evidence="2">
    <location>
        <begin position="32"/>
        <end position="46"/>
    </location>
</feature>
<feature type="compositionally biased region" description="Polar residues" evidence="2">
    <location>
        <begin position="48"/>
        <end position="60"/>
    </location>
</feature>
<feature type="compositionally biased region" description="Acidic residues" evidence="2">
    <location>
        <begin position="63"/>
        <end position="76"/>
    </location>
</feature>
<comment type="function">
    <text evidence="1">Pre-mRNA polyadenylation factor that directly interacts with poly(A) polymerase.</text>
</comment>
<comment type="subcellular location">
    <subcellularLocation>
        <location evidence="1">Nucleus</location>
    </subcellularLocation>
</comment>
<comment type="similarity">
    <text evidence="3">Belongs to the FIP1 family.</text>
</comment>